<proteinExistence type="evidence at protein level"/>
<reference key="1">
    <citation type="journal article" date="1987" name="J. Biol. Chem.">
        <title>The primary structure of iron-superoxide dismutase from Photobacterium leiognathi.</title>
        <authorList>
            <person name="Barra D."/>
            <person name="Schinina M.E."/>
            <person name="Bannister W.H."/>
            <person name="Bannister J.V."/>
            <person name="Bossa F."/>
        </authorList>
    </citation>
    <scope>PROTEIN SEQUENCE</scope>
</reference>
<gene>
    <name type="primary">sodB</name>
</gene>
<keyword id="KW-0903">Direct protein sequencing</keyword>
<keyword id="KW-0408">Iron</keyword>
<keyword id="KW-0479">Metal-binding</keyword>
<keyword id="KW-0560">Oxidoreductase</keyword>
<dbReference type="EC" id="1.15.1.1"/>
<dbReference type="PIR" id="A26707">
    <property type="entry name" value="A26707"/>
</dbReference>
<dbReference type="SMR" id="P09213"/>
<dbReference type="STRING" id="553611.GCA_001557755_03767"/>
<dbReference type="GO" id="GO:0046872">
    <property type="term" value="F:metal ion binding"/>
    <property type="evidence" value="ECO:0007669"/>
    <property type="project" value="UniProtKB-KW"/>
</dbReference>
<dbReference type="GO" id="GO:0004784">
    <property type="term" value="F:superoxide dismutase activity"/>
    <property type="evidence" value="ECO:0007669"/>
    <property type="project" value="UniProtKB-EC"/>
</dbReference>
<dbReference type="FunFam" id="1.10.287.990:FF:000002">
    <property type="entry name" value="Superoxide dismutase"/>
    <property type="match status" value="1"/>
</dbReference>
<dbReference type="FunFam" id="3.55.40.20:FF:000001">
    <property type="entry name" value="Superoxide dismutase"/>
    <property type="match status" value="1"/>
</dbReference>
<dbReference type="Gene3D" id="1.10.287.990">
    <property type="entry name" value="Fe,Mn superoxide dismutase (SOD) domain"/>
    <property type="match status" value="1"/>
</dbReference>
<dbReference type="Gene3D" id="3.55.40.20">
    <property type="entry name" value="Iron/manganese superoxide dismutase, C-terminal domain"/>
    <property type="match status" value="1"/>
</dbReference>
<dbReference type="InterPro" id="IPR001189">
    <property type="entry name" value="Mn/Fe_SOD"/>
</dbReference>
<dbReference type="InterPro" id="IPR019833">
    <property type="entry name" value="Mn/Fe_SOD_BS"/>
</dbReference>
<dbReference type="InterPro" id="IPR019832">
    <property type="entry name" value="Mn/Fe_SOD_C"/>
</dbReference>
<dbReference type="InterPro" id="IPR019831">
    <property type="entry name" value="Mn/Fe_SOD_N"/>
</dbReference>
<dbReference type="InterPro" id="IPR036324">
    <property type="entry name" value="Mn/Fe_SOD_N_sf"/>
</dbReference>
<dbReference type="InterPro" id="IPR036314">
    <property type="entry name" value="SOD_C_sf"/>
</dbReference>
<dbReference type="NCBIfam" id="NF007832">
    <property type="entry name" value="PRK10543.1"/>
    <property type="match status" value="1"/>
</dbReference>
<dbReference type="PANTHER" id="PTHR42769">
    <property type="entry name" value="SUPEROXIDE DISMUTASE"/>
    <property type="match status" value="1"/>
</dbReference>
<dbReference type="PANTHER" id="PTHR42769:SF3">
    <property type="entry name" value="SUPEROXIDE DISMUTASE [FE] 2, CHLOROPLASTIC"/>
    <property type="match status" value="1"/>
</dbReference>
<dbReference type="Pfam" id="PF02777">
    <property type="entry name" value="Sod_Fe_C"/>
    <property type="match status" value="1"/>
</dbReference>
<dbReference type="Pfam" id="PF00081">
    <property type="entry name" value="Sod_Fe_N"/>
    <property type="match status" value="1"/>
</dbReference>
<dbReference type="PIRSF" id="PIRSF000349">
    <property type="entry name" value="SODismutase"/>
    <property type="match status" value="1"/>
</dbReference>
<dbReference type="PRINTS" id="PR01703">
    <property type="entry name" value="MNSODISMTASE"/>
</dbReference>
<dbReference type="SUPFAM" id="SSF54719">
    <property type="entry name" value="Fe,Mn superoxide dismutase (SOD), C-terminal domain"/>
    <property type="match status" value="1"/>
</dbReference>
<dbReference type="SUPFAM" id="SSF46609">
    <property type="entry name" value="Fe,Mn superoxide dismutase (SOD), N-terminal domain"/>
    <property type="match status" value="1"/>
</dbReference>
<dbReference type="PROSITE" id="PS00088">
    <property type="entry name" value="SOD_MN"/>
    <property type="match status" value="1"/>
</dbReference>
<organism>
    <name type="scientific">Photobacterium leiognathi</name>
    <dbReference type="NCBI Taxonomy" id="553611"/>
    <lineage>
        <taxon>Bacteria</taxon>
        <taxon>Pseudomonadati</taxon>
        <taxon>Pseudomonadota</taxon>
        <taxon>Gammaproteobacteria</taxon>
        <taxon>Vibrionales</taxon>
        <taxon>Vibrionaceae</taxon>
        <taxon>Photobacterium</taxon>
    </lineage>
</organism>
<accession>P09213</accession>
<comment type="function">
    <text>Destroys superoxide anion radicals which are normally produced within the cells and which are toxic to biological systems.</text>
</comment>
<comment type="catalytic activity">
    <reaction>
        <text>2 superoxide + 2 H(+) = H2O2 + O2</text>
        <dbReference type="Rhea" id="RHEA:20696"/>
        <dbReference type="ChEBI" id="CHEBI:15378"/>
        <dbReference type="ChEBI" id="CHEBI:15379"/>
        <dbReference type="ChEBI" id="CHEBI:16240"/>
        <dbReference type="ChEBI" id="CHEBI:18421"/>
        <dbReference type="EC" id="1.15.1.1"/>
    </reaction>
</comment>
<comment type="cofactor">
    <cofactor>
        <name>Fe cation</name>
        <dbReference type="ChEBI" id="CHEBI:24875"/>
    </cofactor>
    <text>Binds 1 Fe cation per subunit.</text>
</comment>
<comment type="subunit">
    <text>Homodimer.</text>
</comment>
<comment type="similarity">
    <text evidence="1">Belongs to the iron/manganese superoxide dismutase family.</text>
</comment>
<protein>
    <recommendedName>
        <fullName>Superoxide dismutase [Fe]</fullName>
        <ecNumber>1.15.1.1</ecNumber>
    </recommendedName>
</protein>
<name>SODF_PHOLE</name>
<sequence>AFELPALPFAMNALEPHISQETLEYHYGKHHNTYVVKLNGLVEGTELAEKSLEEIIKTSTGGVFNNAAQVWNHTFYWNCLAPNAGGEPTGEVAAAIEKAFGSFAEFKAKFTDSAINNFGSSWTWLVKNANGSLAIVNTSNAGCPITEEGVTPLLTVDLWEHAYYIDYRNLRPSYMDGFWALVNWDFVSKNLAA</sequence>
<feature type="chain" id="PRO_0000159992" description="Superoxide dismutase [Fe]">
    <location>
        <begin position="1"/>
        <end position="193"/>
    </location>
</feature>
<feature type="binding site">
    <location>
        <position position="26"/>
    </location>
    <ligand>
        <name>Fe cation</name>
        <dbReference type="ChEBI" id="CHEBI:24875"/>
    </ligand>
</feature>
<feature type="binding site">
    <location>
        <position position="73"/>
    </location>
    <ligand>
        <name>Fe cation</name>
        <dbReference type="ChEBI" id="CHEBI:24875"/>
    </ligand>
</feature>
<feature type="binding site">
    <location>
        <position position="157"/>
    </location>
    <ligand>
        <name>Fe cation</name>
        <dbReference type="ChEBI" id="CHEBI:24875"/>
    </ligand>
</feature>
<feature type="binding site">
    <location>
        <position position="161"/>
    </location>
    <ligand>
        <name>Fe cation</name>
        <dbReference type="ChEBI" id="CHEBI:24875"/>
    </ligand>
</feature>
<evidence type="ECO:0000305" key="1"/>